<reference key="1">
    <citation type="journal article" date="2002" name="Proc. Natl. Acad. Sci. U.S.A.">
        <title>The Brucella suis genome reveals fundamental similarities between animal and plant pathogens and symbionts.</title>
        <authorList>
            <person name="Paulsen I.T."/>
            <person name="Seshadri R."/>
            <person name="Nelson K.E."/>
            <person name="Eisen J.A."/>
            <person name="Heidelberg J.F."/>
            <person name="Read T.D."/>
            <person name="Dodson R.J."/>
            <person name="Umayam L.A."/>
            <person name="Brinkac L.M."/>
            <person name="Beanan M.J."/>
            <person name="Daugherty S.C."/>
            <person name="DeBoy R.T."/>
            <person name="Durkin A.S."/>
            <person name="Kolonay J.F."/>
            <person name="Madupu R."/>
            <person name="Nelson W.C."/>
            <person name="Ayodeji B."/>
            <person name="Kraul M."/>
            <person name="Shetty J."/>
            <person name="Malek J.A."/>
            <person name="Van Aken S.E."/>
            <person name="Riedmuller S."/>
            <person name="Tettelin H."/>
            <person name="Gill S.R."/>
            <person name="White O."/>
            <person name="Salzberg S.L."/>
            <person name="Hoover D.L."/>
            <person name="Lindler L.E."/>
            <person name="Halling S.M."/>
            <person name="Boyle S.M."/>
            <person name="Fraser C.M."/>
        </authorList>
    </citation>
    <scope>NUCLEOTIDE SEQUENCE [LARGE SCALE GENOMIC DNA]</scope>
    <source>
        <strain>1330</strain>
    </source>
</reference>
<reference key="2">
    <citation type="journal article" date="2011" name="J. Bacteriol.">
        <title>Revised genome sequence of Brucella suis 1330.</title>
        <authorList>
            <person name="Tae H."/>
            <person name="Shallom S."/>
            <person name="Settlage R."/>
            <person name="Preston D."/>
            <person name="Adams L.G."/>
            <person name="Garner H.R."/>
        </authorList>
    </citation>
    <scope>NUCLEOTIDE SEQUENCE [LARGE SCALE GENOMIC DNA]</scope>
    <source>
        <strain>1330</strain>
    </source>
</reference>
<dbReference type="EC" id="6.3.4.16" evidence="1"/>
<dbReference type="EC" id="6.3.5.5" evidence="1"/>
<dbReference type="EMBL" id="AE014291">
    <property type="protein sequence ID" value="AAN30399.1"/>
    <property type="molecule type" value="Genomic_DNA"/>
</dbReference>
<dbReference type="EMBL" id="CP002997">
    <property type="protein sequence ID" value="AEM18815.1"/>
    <property type="molecule type" value="Genomic_DNA"/>
</dbReference>
<dbReference type="RefSeq" id="WP_006190650.1">
    <property type="nucleotide sequence ID" value="NZ_KN046804.1"/>
</dbReference>
<dbReference type="SMR" id="Q8FZJ3"/>
<dbReference type="GeneID" id="45052494"/>
<dbReference type="KEGG" id="bms:BR1488"/>
<dbReference type="KEGG" id="bsi:BS1330_I1482"/>
<dbReference type="PATRIC" id="fig|204722.21.peg.2898"/>
<dbReference type="HOGENOM" id="CLU_000513_1_0_5"/>
<dbReference type="PhylomeDB" id="Q8FZJ3"/>
<dbReference type="UniPathway" id="UPA00068">
    <property type="reaction ID" value="UER00171"/>
</dbReference>
<dbReference type="UniPathway" id="UPA00070">
    <property type="reaction ID" value="UER00115"/>
</dbReference>
<dbReference type="Proteomes" id="UP000007104">
    <property type="component" value="Chromosome I"/>
</dbReference>
<dbReference type="GO" id="GO:0005737">
    <property type="term" value="C:cytoplasm"/>
    <property type="evidence" value="ECO:0007669"/>
    <property type="project" value="TreeGrafter"/>
</dbReference>
<dbReference type="GO" id="GO:0005524">
    <property type="term" value="F:ATP binding"/>
    <property type="evidence" value="ECO:0007669"/>
    <property type="project" value="UniProtKB-UniRule"/>
</dbReference>
<dbReference type="GO" id="GO:0004087">
    <property type="term" value="F:carbamoyl-phosphate synthase (ammonia) activity"/>
    <property type="evidence" value="ECO:0007669"/>
    <property type="project" value="RHEA"/>
</dbReference>
<dbReference type="GO" id="GO:0004088">
    <property type="term" value="F:carbamoyl-phosphate synthase (glutamine-hydrolyzing) activity"/>
    <property type="evidence" value="ECO:0007669"/>
    <property type="project" value="UniProtKB-UniRule"/>
</dbReference>
<dbReference type="GO" id="GO:0046872">
    <property type="term" value="F:metal ion binding"/>
    <property type="evidence" value="ECO:0007669"/>
    <property type="project" value="UniProtKB-KW"/>
</dbReference>
<dbReference type="GO" id="GO:0044205">
    <property type="term" value="P:'de novo' UMP biosynthetic process"/>
    <property type="evidence" value="ECO:0007669"/>
    <property type="project" value="UniProtKB-UniRule"/>
</dbReference>
<dbReference type="GO" id="GO:0006541">
    <property type="term" value="P:glutamine metabolic process"/>
    <property type="evidence" value="ECO:0007669"/>
    <property type="project" value="TreeGrafter"/>
</dbReference>
<dbReference type="GO" id="GO:0006526">
    <property type="term" value="P:L-arginine biosynthetic process"/>
    <property type="evidence" value="ECO:0007669"/>
    <property type="project" value="UniProtKB-UniRule"/>
</dbReference>
<dbReference type="CDD" id="cd01424">
    <property type="entry name" value="MGS_CPS_II"/>
    <property type="match status" value="1"/>
</dbReference>
<dbReference type="FunFam" id="1.10.1030.10:FF:000002">
    <property type="entry name" value="Carbamoyl-phosphate synthase large chain"/>
    <property type="match status" value="1"/>
</dbReference>
<dbReference type="FunFam" id="3.30.470.20:FF:000007">
    <property type="entry name" value="Carbamoyl-phosphate synthase large chain"/>
    <property type="match status" value="1"/>
</dbReference>
<dbReference type="FunFam" id="3.30.470.20:FF:000013">
    <property type="entry name" value="Carbamoyl-phosphate synthase large chain"/>
    <property type="match status" value="1"/>
</dbReference>
<dbReference type="FunFam" id="3.40.50.20:FF:000001">
    <property type="entry name" value="Carbamoyl-phosphate synthase large chain"/>
    <property type="match status" value="1"/>
</dbReference>
<dbReference type="FunFam" id="3.40.50.20:FF:000003">
    <property type="entry name" value="Carbamoyl-phosphate synthase large chain"/>
    <property type="match status" value="1"/>
</dbReference>
<dbReference type="Gene3D" id="3.40.50.20">
    <property type="match status" value="2"/>
</dbReference>
<dbReference type="Gene3D" id="3.30.470.20">
    <property type="entry name" value="ATP-grasp fold, B domain"/>
    <property type="match status" value="2"/>
</dbReference>
<dbReference type="Gene3D" id="1.10.1030.10">
    <property type="entry name" value="Carbamoyl-phosphate synthetase, large subunit oligomerisation domain"/>
    <property type="match status" value="1"/>
</dbReference>
<dbReference type="Gene3D" id="3.40.50.1380">
    <property type="entry name" value="Methylglyoxal synthase-like domain"/>
    <property type="match status" value="1"/>
</dbReference>
<dbReference type="HAMAP" id="MF_01210_B">
    <property type="entry name" value="CPSase_L_chain_B"/>
    <property type="match status" value="1"/>
</dbReference>
<dbReference type="InterPro" id="IPR011761">
    <property type="entry name" value="ATP-grasp"/>
</dbReference>
<dbReference type="InterPro" id="IPR006275">
    <property type="entry name" value="CarbamoylP_synth_lsu"/>
</dbReference>
<dbReference type="InterPro" id="IPR005480">
    <property type="entry name" value="CarbamoylP_synth_lsu_oligo"/>
</dbReference>
<dbReference type="InterPro" id="IPR036897">
    <property type="entry name" value="CarbamoylP_synth_lsu_oligo_sf"/>
</dbReference>
<dbReference type="InterPro" id="IPR005479">
    <property type="entry name" value="CbamoylP_synth_lsu-like_ATP-bd"/>
</dbReference>
<dbReference type="InterPro" id="IPR005483">
    <property type="entry name" value="CbamoylP_synth_lsu_CPSase_dom"/>
</dbReference>
<dbReference type="InterPro" id="IPR011607">
    <property type="entry name" value="MGS-like_dom"/>
</dbReference>
<dbReference type="InterPro" id="IPR036914">
    <property type="entry name" value="MGS-like_dom_sf"/>
</dbReference>
<dbReference type="InterPro" id="IPR033937">
    <property type="entry name" value="MGS_CPS_CarB"/>
</dbReference>
<dbReference type="InterPro" id="IPR016185">
    <property type="entry name" value="PreATP-grasp_dom_sf"/>
</dbReference>
<dbReference type="NCBIfam" id="TIGR01369">
    <property type="entry name" value="CPSaseII_lrg"/>
    <property type="match status" value="1"/>
</dbReference>
<dbReference type="NCBIfam" id="NF003671">
    <property type="entry name" value="PRK05294.1"/>
    <property type="match status" value="1"/>
</dbReference>
<dbReference type="NCBIfam" id="NF009455">
    <property type="entry name" value="PRK12815.1"/>
    <property type="match status" value="1"/>
</dbReference>
<dbReference type="PANTHER" id="PTHR11405:SF53">
    <property type="entry name" value="CARBAMOYL-PHOSPHATE SYNTHASE [AMMONIA], MITOCHONDRIAL"/>
    <property type="match status" value="1"/>
</dbReference>
<dbReference type="PANTHER" id="PTHR11405">
    <property type="entry name" value="CARBAMOYLTRANSFERASE FAMILY MEMBER"/>
    <property type="match status" value="1"/>
</dbReference>
<dbReference type="Pfam" id="PF02786">
    <property type="entry name" value="CPSase_L_D2"/>
    <property type="match status" value="2"/>
</dbReference>
<dbReference type="Pfam" id="PF02787">
    <property type="entry name" value="CPSase_L_D3"/>
    <property type="match status" value="1"/>
</dbReference>
<dbReference type="Pfam" id="PF02142">
    <property type="entry name" value="MGS"/>
    <property type="match status" value="1"/>
</dbReference>
<dbReference type="PRINTS" id="PR00098">
    <property type="entry name" value="CPSASE"/>
</dbReference>
<dbReference type="SMART" id="SM01096">
    <property type="entry name" value="CPSase_L_D3"/>
    <property type="match status" value="1"/>
</dbReference>
<dbReference type="SMART" id="SM00851">
    <property type="entry name" value="MGS"/>
    <property type="match status" value="1"/>
</dbReference>
<dbReference type="SUPFAM" id="SSF48108">
    <property type="entry name" value="Carbamoyl phosphate synthetase, large subunit connection domain"/>
    <property type="match status" value="1"/>
</dbReference>
<dbReference type="SUPFAM" id="SSF56059">
    <property type="entry name" value="Glutathione synthetase ATP-binding domain-like"/>
    <property type="match status" value="2"/>
</dbReference>
<dbReference type="SUPFAM" id="SSF52335">
    <property type="entry name" value="Methylglyoxal synthase-like"/>
    <property type="match status" value="1"/>
</dbReference>
<dbReference type="SUPFAM" id="SSF52440">
    <property type="entry name" value="PreATP-grasp domain"/>
    <property type="match status" value="2"/>
</dbReference>
<dbReference type="PROSITE" id="PS50975">
    <property type="entry name" value="ATP_GRASP"/>
    <property type="match status" value="2"/>
</dbReference>
<dbReference type="PROSITE" id="PS00866">
    <property type="entry name" value="CPSASE_1"/>
    <property type="match status" value="1"/>
</dbReference>
<dbReference type="PROSITE" id="PS00867">
    <property type="entry name" value="CPSASE_2"/>
    <property type="match status" value="2"/>
</dbReference>
<dbReference type="PROSITE" id="PS51855">
    <property type="entry name" value="MGS"/>
    <property type="match status" value="1"/>
</dbReference>
<proteinExistence type="inferred from homology"/>
<name>CARB_BRUSU</name>
<gene>
    <name evidence="1" type="primary">carB</name>
    <name type="ordered locus">BR1488</name>
    <name type="ordered locus">BS1330_I1482</name>
</gene>
<comment type="function">
    <text evidence="1">Large subunit of the glutamine-dependent carbamoyl phosphate synthetase (CPSase). CPSase catalyzes the formation of carbamoyl phosphate from the ammonia moiety of glutamine, carbonate, and phosphate donated by ATP, constituting the first step of 2 biosynthetic pathways, one leading to arginine and/or urea and the other to pyrimidine nucleotides. The large subunit (synthetase) binds the substrates ammonia (free or transferred from glutamine from the small subunit), hydrogencarbonate and ATP and carries out an ATP-coupled ligase reaction, activating hydrogencarbonate by forming carboxy phosphate which reacts with ammonia to form carbamoyl phosphate.</text>
</comment>
<comment type="catalytic activity">
    <reaction evidence="1">
        <text>hydrogencarbonate + L-glutamine + 2 ATP + H2O = carbamoyl phosphate + L-glutamate + 2 ADP + phosphate + 2 H(+)</text>
        <dbReference type="Rhea" id="RHEA:18633"/>
        <dbReference type="ChEBI" id="CHEBI:15377"/>
        <dbReference type="ChEBI" id="CHEBI:15378"/>
        <dbReference type="ChEBI" id="CHEBI:17544"/>
        <dbReference type="ChEBI" id="CHEBI:29985"/>
        <dbReference type="ChEBI" id="CHEBI:30616"/>
        <dbReference type="ChEBI" id="CHEBI:43474"/>
        <dbReference type="ChEBI" id="CHEBI:58228"/>
        <dbReference type="ChEBI" id="CHEBI:58359"/>
        <dbReference type="ChEBI" id="CHEBI:456216"/>
        <dbReference type="EC" id="6.3.5.5"/>
    </reaction>
</comment>
<comment type="catalytic activity">
    <molecule>Carbamoyl phosphate synthase large chain</molecule>
    <reaction evidence="1">
        <text>hydrogencarbonate + NH4(+) + 2 ATP = carbamoyl phosphate + 2 ADP + phosphate + 2 H(+)</text>
        <dbReference type="Rhea" id="RHEA:18029"/>
        <dbReference type="ChEBI" id="CHEBI:15378"/>
        <dbReference type="ChEBI" id="CHEBI:17544"/>
        <dbReference type="ChEBI" id="CHEBI:28938"/>
        <dbReference type="ChEBI" id="CHEBI:30616"/>
        <dbReference type="ChEBI" id="CHEBI:43474"/>
        <dbReference type="ChEBI" id="CHEBI:58228"/>
        <dbReference type="ChEBI" id="CHEBI:456216"/>
        <dbReference type="EC" id="6.3.4.16"/>
    </reaction>
</comment>
<comment type="cofactor">
    <cofactor evidence="1">
        <name>Mg(2+)</name>
        <dbReference type="ChEBI" id="CHEBI:18420"/>
    </cofactor>
    <cofactor evidence="1">
        <name>Mn(2+)</name>
        <dbReference type="ChEBI" id="CHEBI:29035"/>
    </cofactor>
    <text evidence="1">Binds 4 Mg(2+) or Mn(2+) ions per subunit.</text>
</comment>
<comment type="pathway">
    <text evidence="1">Amino-acid biosynthesis; L-arginine biosynthesis; carbamoyl phosphate from bicarbonate: step 1/1.</text>
</comment>
<comment type="pathway">
    <text evidence="1">Pyrimidine metabolism; UMP biosynthesis via de novo pathway; (S)-dihydroorotate from bicarbonate: step 1/3.</text>
</comment>
<comment type="subunit">
    <text evidence="1">Composed of two chains; the small (or glutamine) chain promotes the hydrolysis of glutamine to ammonia, which is used by the large (or ammonia) chain to synthesize carbamoyl phosphate. Tetramer of heterodimers (alpha,beta)4.</text>
</comment>
<comment type="domain">
    <text evidence="1">The large subunit is composed of 2 ATP-grasp domains that are involved in binding the 2 ATP molecules needed for carbamoyl phosphate synthesis. The N-terminal ATP-grasp domain (referred to as the carboxyphosphate synthetic component) catalyzes the ATP-dependent phosphorylation of hydrogencarbonate to carboxyphosphate and the subsequent nucleophilic attack by ammonia to form a carbamate intermediate. The C-terminal ATP-grasp domain (referred to as the carbamoyl phosphate synthetic component) then catalyzes the phosphorylation of carbamate with the second ATP to form the end product carbamoyl phosphate. The reactive and unstable enzyme intermediates are sequentially channeled from one active site to the next through the interior of the protein over a distance of at least 96 A.</text>
</comment>
<comment type="similarity">
    <text evidence="1">Belongs to the CarB family.</text>
</comment>
<sequence>MPKRTDIKSILIIGAGPIVIGQACEFDYSGTQACKALKEEGYRIILVNSNPATIMTDPDLADATYIEPITPEVVAKIIAKERPDAILPTMGGQTALNTALSLRRMGVLERYNVEMIGAKAEAIDKAEDRALFREAMKKIGLDTPGSMLANATEIKDEDRKRHEAKRAEVKAQFSGDELDKALDKLETEWQLGEVERKQRYMSHALAKAAQALDVVGLPAIIRPSFTLGGTGGGIAYNRQEFFEIIERGLDASPTTEVLIEESVLGWKEYEMEVVRDHADNCIIICSIENLDPMGVHTGDSITVAPALTLTDKEYQIMRNASIAVLREIGVETGGSNVQFAINPANGRMIVIEMNPRVSRSSALASKATGFPIAKVAAKLAVGYTLDELDNDITGGATPASFEPSIDYVVTKIPRFAFEKFPGSSPILTTAMKSVGEVMAIGRTFQESLQKALRGLETGLTGFDEIAIPNIEEGDEKNAIRAAIGTPTPDCLRMVAQAMRLGLSVEQVHDASKIDPWFLEQIESIVKTEERIREHGLPQDAENLRMLKAMGFSDARLASLTAKDAEDVAKLRADLDVHPVYKRIDTCAAEFASPTAYMYSTYETPFVGQPRSEAEVSDRKKVVILGGGPNRIGQGIEFDYCCCHAAFALGDADYEAIMVNCNPETVSTDYDTSDRLYFEPLTAEDVLEILRVEKQKGTLHGVIVQFGGQTPLKLANALEKAGIPILGTSPDAIDLAEDRDRFQKLLIKLDLNQPKNGIAYSVEQARLVAADLGFPLVVRPSYVLGGRAMQIIHDERGLQAYLLDTVPELVPEDIKAKYPNDKTGQINTLLGKNPLLFDTYLTEAIEVDVDCLCDGKDSLVAGIMEHIEEAGIHSGDSACSLPVHTLSPEIVAELERQTAALATALHVGGLMNVQFAIKDGEIFILEVNPRASRTVPFVAKTVGTPIAKVAARIMAGESLEAAFDAYGGKPQPTARPHIAVKEAVFPFARFPGVDTLLGPEMRSTGEVMGLDYDYALAFAKAQLGAGVELPREGTVFVSVRDEDKERVLGPVRKLASIGFKVMATGGTQKFLEANGVESTKINKVIEGRPHVEDAIRNRQIHLVFNTTDSASAVSDSKSIRRATLMQKLPYYTTMAGAESAAEAIAALKAGSLEVRPLQDYFRS</sequence>
<protein>
    <recommendedName>
        <fullName evidence="1">Carbamoyl phosphate synthase large chain</fullName>
        <ecNumber evidence="1">6.3.4.16</ecNumber>
        <ecNumber evidence="1">6.3.5.5</ecNumber>
    </recommendedName>
    <alternativeName>
        <fullName evidence="1">Carbamoyl phosphate synthetase ammonia chain</fullName>
    </alternativeName>
</protein>
<evidence type="ECO:0000255" key="1">
    <source>
        <dbReference type="HAMAP-Rule" id="MF_01210"/>
    </source>
</evidence>
<accession>Q8FZJ3</accession>
<accession>G0KBP6</accession>
<feature type="chain" id="PRO_0000144994" description="Carbamoyl phosphate synthase large chain">
    <location>
        <begin position="1"/>
        <end position="1162"/>
    </location>
</feature>
<feature type="domain" description="ATP-grasp 1" evidence="1">
    <location>
        <begin position="186"/>
        <end position="381"/>
    </location>
</feature>
<feature type="domain" description="ATP-grasp 2" evidence="1">
    <location>
        <begin position="742"/>
        <end position="954"/>
    </location>
</feature>
<feature type="domain" description="MGS-like" evidence="1">
    <location>
        <begin position="1026"/>
        <end position="1162"/>
    </location>
</feature>
<feature type="region of interest" description="Carboxyphosphate synthetic domain" evidence="1">
    <location>
        <begin position="1"/>
        <end position="456"/>
    </location>
</feature>
<feature type="region of interest" description="Oligomerization domain" evidence="1">
    <location>
        <begin position="457"/>
        <end position="613"/>
    </location>
</feature>
<feature type="region of interest" description="Carbamoyl phosphate synthetic domain" evidence="1">
    <location>
        <begin position="614"/>
        <end position="1025"/>
    </location>
</feature>
<feature type="region of interest" description="Allosteric domain" evidence="1">
    <location>
        <begin position="1026"/>
        <end position="1162"/>
    </location>
</feature>
<feature type="binding site" evidence="1">
    <location>
        <position position="129"/>
    </location>
    <ligand>
        <name>ATP</name>
        <dbReference type="ChEBI" id="CHEBI:30616"/>
        <label>1</label>
    </ligand>
</feature>
<feature type="binding site" evidence="1">
    <location>
        <position position="222"/>
    </location>
    <ligand>
        <name>ATP</name>
        <dbReference type="ChEBI" id="CHEBI:30616"/>
        <label>1</label>
    </ligand>
</feature>
<feature type="binding site" evidence="1">
    <location>
        <position position="228"/>
    </location>
    <ligand>
        <name>ATP</name>
        <dbReference type="ChEBI" id="CHEBI:30616"/>
        <label>1</label>
    </ligand>
</feature>
<feature type="binding site" evidence="1">
    <location>
        <position position="229"/>
    </location>
    <ligand>
        <name>ATP</name>
        <dbReference type="ChEBI" id="CHEBI:30616"/>
        <label>1</label>
    </ligand>
</feature>
<feature type="binding site" evidence="1">
    <location>
        <position position="261"/>
    </location>
    <ligand>
        <name>ATP</name>
        <dbReference type="ChEBI" id="CHEBI:30616"/>
        <label>1</label>
    </ligand>
</feature>
<feature type="binding site" evidence="1">
    <location>
        <position position="263"/>
    </location>
    <ligand>
        <name>ATP</name>
        <dbReference type="ChEBI" id="CHEBI:30616"/>
        <label>1</label>
    </ligand>
</feature>
<feature type="binding site" evidence="1">
    <location>
        <position position="268"/>
    </location>
    <ligand>
        <name>ATP</name>
        <dbReference type="ChEBI" id="CHEBI:30616"/>
        <label>1</label>
    </ligand>
</feature>
<feature type="binding site" evidence="1">
    <location>
        <position position="294"/>
    </location>
    <ligand>
        <name>ATP</name>
        <dbReference type="ChEBI" id="CHEBI:30616"/>
        <label>1</label>
    </ligand>
</feature>
<feature type="binding site" evidence="1">
    <location>
        <position position="295"/>
    </location>
    <ligand>
        <name>ATP</name>
        <dbReference type="ChEBI" id="CHEBI:30616"/>
        <label>1</label>
    </ligand>
</feature>
<feature type="binding site" evidence="1">
    <location>
        <position position="296"/>
    </location>
    <ligand>
        <name>ATP</name>
        <dbReference type="ChEBI" id="CHEBI:30616"/>
        <label>1</label>
    </ligand>
</feature>
<feature type="binding site" evidence="1">
    <location>
        <position position="338"/>
    </location>
    <ligand>
        <name>ATP</name>
        <dbReference type="ChEBI" id="CHEBI:30616"/>
        <label>1</label>
    </ligand>
</feature>
<feature type="binding site" evidence="1">
    <location>
        <position position="338"/>
    </location>
    <ligand>
        <name>Mg(2+)</name>
        <dbReference type="ChEBI" id="CHEBI:18420"/>
        <label>1</label>
    </ligand>
</feature>
<feature type="binding site" evidence="1">
    <location>
        <position position="338"/>
    </location>
    <ligand>
        <name>Mn(2+)</name>
        <dbReference type="ChEBI" id="CHEBI:29035"/>
        <label>1</label>
    </ligand>
</feature>
<feature type="binding site" evidence="1">
    <location>
        <position position="352"/>
    </location>
    <ligand>
        <name>ATP</name>
        <dbReference type="ChEBI" id="CHEBI:30616"/>
        <label>1</label>
    </ligand>
</feature>
<feature type="binding site" evidence="1">
    <location>
        <position position="352"/>
    </location>
    <ligand>
        <name>Mg(2+)</name>
        <dbReference type="ChEBI" id="CHEBI:18420"/>
        <label>1</label>
    </ligand>
</feature>
<feature type="binding site" evidence="1">
    <location>
        <position position="352"/>
    </location>
    <ligand>
        <name>Mg(2+)</name>
        <dbReference type="ChEBI" id="CHEBI:18420"/>
        <label>2</label>
    </ligand>
</feature>
<feature type="binding site" evidence="1">
    <location>
        <position position="352"/>
    </location>
    <ligand>
        <name>Mn(2+)</name>
        <dbReference type="ChEBI" id="CHEBI:29035"/>
        <label>1</label>
    </ligand>
</feature>
<feature type="binding site" evidence="1">
    <location>
        <position position="352"/>
    </location>
    <ligand>
        <name>Mn(2+)</name>
        <dbReference type="ChEBI" id="CHEBI:29035"/>
        <label>2</label>
    </ligand>
</feature>
<feature type="binding site" evidence="1">
    <location>
        <position position="354"/>
    </location>
    <ligand>
        <name>Mg(2+)</name>
        <dbReference type="ChEBI" id="CHEBI:18420"/>
        <label>2</label>
    </ligand>
</feature>
<feature type="binding site" evidence="1">
    <location>
        <position position="354"/>
    </location>
    <ligand>
        <name>Mn(2+)</name>
        <dbReference type="ChEBI" id="CHEBI:29035"/>
        <label>2</label>
    </ligand>
</feature>
<feature type="binding site" evidence="1">
    <location>
        <position position="778"/>
    </location>
    <ligand>
        <name>ATP</name>
        <dbReference type="ChEBI" id="CHEBI:30616"/>
        <label>2</label>
    </ligand>
</feature>
<feature type="binding site" evidence="1">
    <location>
        <position position="838"/>
    </location>
    <ligand>
        <name>ATP</name>
        <dbReference type="ChEBI" id="CHEBI:30616"/>
        <label>2</label>
    </ligand>
</feature>
<feature type="binding site" evidence="1">
    <location>
        <position position="840"/>
    </location>
    <ligand>
        <name>ATP</name>
        <dbReference type="ChEBI" id="CHEBI:30616"/>
        <label>2</label>
    </ligand>
</feature>
<feature type="binding site" evidence="1">
    <location>
        <position position="845"/>
    </location>
    <ligand>
        <name>ATP</name>
        <dbReference type="ChEBI" id="CHEBI:30616"/>
        <label>2</label>
    </ligand>
</feature>
<feature type="binding site" evidence="1">
    <location>
        <position position="870"/>
    </location>
    <ligand>
        <name>ATP</name>
        <dbReference type="ChEBI" id="CHEBI:30616"/>
        <label>2</label>
    </ligand>
</feature>
<feature type="binding site" evidence="1">
    <location>
        <position position="871"/>
    </location>
    <ligand>
        <name>ATP</name>
        <dbReference type="ChEBI" id="CHEBI:30616"/>
        <label>2</label>
    </ligand>
</feature>
<feature type="binding site" evidence="1">
    <location>
        <position position="872"/>
    </location>
    <ligand>
        <name>ATP</name>
        <dbReference type="ChEBI" id="CHEBI:30616"/>
        <label>2</label>
    </ligand>
</feature>
<feature type="binding site" evidence="1">
    <location>
        <position position="873"/>
    </location>
    <ligand>
        <name>ATP</name>
        <dbReference type="ChEBI" id="CHEBI:30616"/>
        <label>2</label>
    </ligand>
</feature>
<feature type="binding site" evidence="1">
    <location>
        <position position="913"/>
    </location>
    <ligand>
        <name>ATP</name>
        <dbReference type="ChEBI" id="CHEBI:30616"/>
        <label>2</label>
    </ligand>
</feature>
<feature type="binding site" evidence="1">
    <location>
        <position position="913"/>
    </location>
    <ligand>
        <name>Mg(2+)</name>
        <dbReference type="ChEBI" id="CHEBI:18420"/>
        <label>3</label>
    </ligand>
</feature>
<feature type="binding site" evidence="1">
    <location>
        <position position="913"/>
    </location>
    <ligand>
        <name>Mn(2+)</name>
        <dbReference type="ChEBI" id="CHEBI:29035"/>
        <label>3</label>
    </ligand>
</feature>
<feature type="binding site" evidence="1">
    <location>
        <position position="925"/>
    </location>
    <ligand>
        <name>ATP</name>
        <dbReference type="ChEBI" id="CHEBI:30616"/>
        <label>2</label>
    </ligand>
</feature>
<feature type="binding site" evidence="1">
    <location>
        <position position="925"/>
    </location>
    <ligand>
        <name>Mg(2+)</name>
        <dbReference type="ChEBI" id="CHEBI:18420"/>
        <label>3</label>
    </ligand>
</feature>
<feature type="binding site" evidence="1">
    <location>
        <position position="925"/>
    </location>
    <ligand>
        <name>Mg(2+)</name>
        <dbReference type="ChEBI" id="CHEBI:18420"/>
        <label>4</label>
    </ligand>
</feature>
<feature type="binding site" evidence="1">
    <location>
        <position position="925"/>
    </location>
    <ligand>
        <name>Mn(2+)</name>
        <dbReference type="ChEBI" id="CHEBI:29035"/>
        <label>3</label>
    </ligand>
</feature>
<feature type="binding site" evidence="1">
    <location>
        <position position="925"/>
    </location>
    <ligand>
        <name>Mn(2+)</name>
        <dbReference type="ChEBI" id="CHEBI:29035"/>
        <label>4</label>
    </ligand>
</feature>
<feature type="binding site" evidence="1">
    <location>
        <position position="927"/>
    </location>
    <ligand>
        <name>Mg(2+)</name>
        <dbReference type="ChEBI" id="CHEBI:18420"/>
        <label>4</label>
    </ligand>
</feature>
<feature type="binding site" evidence="1">
    <location>
        <position position="927"/>
    </location>
    <ligand>
        <name>Mn(2+)</name>
        <dbReference type="ChEBI" id="CHEBI:29035"/>
        <label>4</label>
    </ligand>
</feature>
<keyword id="KW-0028">Amino-acid biosynthesis</keyword>
<keyword id="KW-0055">Arginine biosynthesis</keyword>
<keyword id="KW-0067">ATP-binding</keyword>
<keyword id="KW-0436">Ligase</keyword>
<keyword id="KW-0460">Magnesium</keyword>
<keyword id="KW-0464">Manganese</keyword>
<keyword id="KW-0479">Metal-binding</keyword>
<keyword id="KW-0547">Nucleotide-binding</keyword>
<keyword id="KW-0665">Pyrimidine biosynthesis</keyword>
<keyword id="KW-0677">Repeat</keyword>
<organism>
    <name type="scientific">Brucella suis biovar 1 (strain 1330)</name>
    <dbReference type="NCBI Taxonomy" id="204722"/>
    <lineage>
        <taxon>Bacteria</taxon>
        <taxon>Pseudomonadati</taxon>
        <taxon>Pseudomonadota</taxon>
        <taxon>Alphaproteobacteria</taxon>
        <taxon>Hyphomicrobiales</taxon>
        <taxon>Brucellaceae</taxon>
        <taxon>Brucella/Ochrobactrum group</taxon>
        <taxon>Brucella</taxon>
    </lineage>
</organism>